<proteinExistence type="inferred from homology"/>
<dbReference type="EC" id="7.1.1.9"/>
<dbReference type="EMBL" id="AL022602">
    <property type="protein sequence ID" value="CAA18701.1"/>
    <property type="molecule type" value="Genomic_DNA"/>
</dbReference>
<dbReference type="EMBL" id="AL583920">
    <property type="protein sequence ID" value="CAC31263.1"/>
    <property type="molecule type" value="Genomic_DNA"/>
</dbReference>
<dbReference type="PIR" id="D87019">
    <property type="entry name" value="D87019"/>
</dbReference>
<dbReference type="RefSeq" id="NP_301668.1">
    <property type="nucleotide sequence ID" value="NC_002677.1"/>
</dbReference>
<dbReference type="RefSeq" id="WP_010907992.1">
    <property type="nucleotide sequence ID" value="NC_002677.1"/>
</dbReference>
<dbReference type="SMR" id="O69582"/>
<dbReference type="STRING" id="272631.gene:17574708"/>
<dbReference type="KEGG" id="mle:ML0882"/>
<dbReference type="PATRIC" id="fig|272631.5.peg.1613"/>
<dbReference type="Leproma" id="ML0882"/>
<dbReference type="eggNOG" id="COG1845">
    <property type="taxonomic scope" value="Bacteria"/>
</dbReference>
<dbReference type="HOGENOM" id="CLU_044071_1_1_11"/>
<dbReference type="OrthoDB" id="9810850at2"/>
<dbReference type="Proteomes" id="UP000000806">
    <property type="component" value="Chromosome"/>
</dbReference>
<dbReference type="GO" id="GO:0005886">
    <property type="term" value="C:plasma membrane"/>
    <property type="evidence" value="ECO:0007669"/>
    <property type="project" value="UniProtKB-SubCell"/>
</dbReference>
<dbReference type="GO" id="GO:0004129">
    <property type="term" value="F:cytochrome-c oxidase activity"/>
    <property type="evidence" value="ECO:0007669"/>
    <property type="project" value="UniProtKB-EC"/>
</dbReference>
<dbReference type="GO" id="GO:0019646">
    <property type="term" value="P:aerobic electron transport chain"/>
    <property type="evidence" value="ECO:0007669"/>
    <property type="project" value="InterPro"/>
</dbReference>
<dbReference type="CDD" id="cd00386">
    <property type="entry name" value="Heme_Cu_Oxidase_III_like"/>
    <property type="match status" value="1"/>
</dbReference>
<dbReference type="FunFam" id="1.20.120.80:FF:000001">
    <property type="entry name" value="Cytochrome (Ubi)quinol oxidase subunit III"/>
    <property type="match status" value="1"/>
</dbReference>
<dbReference type="Gene3D" id="1.20.120.80">
    <property type="entry name" value="Cytochrome c oxidase, subunit III, four-helix bundle"/>
    <property type="match status" value="1"/>
</dbReference>
<dbReference type="InterPro" id="IPR024791">
    <property type="entry name" value="Cyt_c/ubiquinol_Oxase_su3"/>
</dbReference>
<dbReference type="InterPro" id="IPR000298">
    <property type="entry name" value="Cyt_c_oxidase-like_su3"/>
</dbReference>
<dbReference type="InterPro" id="IPR035973">
    <property type="entry name" value="Cyt_c_oxidase_su3-like_sf"/>
</dbReference>
<dbReference type="InterPro" id="IPR013833">
    <property type="entry name" value="Cyt_c_oxidase_su3_a-hlx"/>
</dbReference>
<dbReference type="PANTHER" id="PTHR11403:SF2">
    <property type="entry name" value="CYTOCHROME BO(3) UBIQUINOL OXIDASE SUBUNIT 3"/>
    <property type="match status" value="1"/>
</dbReference>
<dbReference type="PANTHER" id="PTHR11403">
    <property type="entry name" value="CYTOCHROME C OXIDASE SUBUNIT III"/>
    <property type="match status" value="1"/>
</dbReference>
<dbReference type="Pfam" id="PF00510">
    <property type="entry name" value="COX3"/>
    <property type="match status" value="1"/>
</dbReference>
<dbReference type="SUPFAM" id="SSF81452">
    <property type="entry name" value="Cytochrome c oxidase subunit III-like"/>
    <property type="match status" value="1"/>
</dbReference>
<dbReference type="PROSITE" id="PS50253">
    <property type="entry name" value="COX3"/>
    <property type="match status" value="1"/>
</dbReference>
<comment type="catalytic activity">
    <reaction>
        <text>4 Fe(II)-[cytochrome c] + O2 + 8 H(+)(in) = 4 Fe(III)-[cytochrome c] + 2 H2O + 4 H(+)(out)</text>
        <dbReference type="Rhea" id="RHEA:11436"/>
        <dbReference type="Rhea" id="RHEA-COMP:10350"/>
        <dbReference type="Rhea" id="RHEA-COMP:14399"/>
        <dbReference type="ChEBI" id="CHEBI:15377"/>
        <dbReference type="ChEBI" id="CHEBI:15378"/>
        <dbReference type="ChEBI" id="CHEBI:15379"/>
        <dbReference type="ChEBI" id="CHEBI:29033"/>
        <dbReference type="ChEBI" id="CHEBI:29034"/>
        <dbReference type="EC" id="7.1.1.9"/>
    </reaction>
</comment>
<comment type="subcellular location">
    <subcellularLocation>
        <location evidence="1">Cell membrane</location>
        <topology evidence="1">Multi-pass membrane protein</topology>
    </subcellularLocation>
</comment>
<comment type="similarity">
    <text evidence="3">Belongs to the cytochrome c oxidase subunit 3 family.</text>
</comment>
<organism>
    <name type="scientific">Mycobacterium leprae (strain TN)</name>
    <dbReference type="NCBI Taxonomy" id="272631"/>
    <lineage>
        <taxon>Bacteria</taxon>
        <taxon>Bacillati</taxon>
        <taxon>Actinomycetota</taxon>
        <taxon>Actinomycetes</taxon>
        <taxon>Mycobacteriales</taxon>
        <taxon>Mycobacteriaceae</taxon>
        <taxon>Mycobacterium</taxon>
    </lineage>
</organism>
<keyword id="KW-1003">Cell membrane</keyword>
<keyword id="KW-0472">Membrane</keyword>
<keyword id="KW-1185">Reference proteome</keyword>
<keyword id="KW-1278">Translocase</keyword>
<keyword id="KW-0812">Transmembrane</keyword>
<keyword id="KW-1133">Transmembrane helix</keyword>
<accession>O69582</accession>
<sequence length="202" mass="22377">MTSTVGTLGTAITSRVHSLNRPNMVSVGTVVWLSSELMFFAGLFAMYFTARAQAGGKWPPSTELNLYQAVPVTLVLIASSFTCQMGVFSAERGDVFGLRRWYVITLLMGLFFVLGQGYEYYHLITHGTTIPSSAYGSVFYLATGFHGLHVTGGLIAFIFLLARTTMSKFTPAQATASIVVSYYWHFVDIVWIALFTVIYFIR</sequence>
<name>COX3_MYCLE</name>
<gene>
    <name type="primary">ctaE</name>
    <name type="ordered locus">ML0882</name>
</gene>
<evidence type="ECO:0000250" key="1"/>
<evidence type="ECO:0000255" key="2"/>
<evidence type="ECO:0000305" key="3"/>
<reference key="1">
    <citation type="journal article" date="2001" name="Nature">
        <title>Massive gene decay in the leprosy bacillus.</title>
        <authorList>
            <person name="Cole S.T."/>
            <person name="Eiglmeier K."/>
            <person name="Parkhill J."/>
            <person name="James K.D."/>
            <person name="Thomson N.R."/>
            <person name="Wheeler P.R."/>
            <person name="Honore N."/>
            <person name="Garnier T."/>
            <person name="Churcher C.M."/>
            <person name="Harris D.E."/>
            <person name="Mungall K.L."/>
            <person name="Basham D."/>
            <person name="Brown D."/>
            <person name="Chillingworth T."/>
            <person name="Connor R."/>
            <person name="Davies R.M."/>
            <person name="Devlin K."/>
            <person name="Duthoy S."/>
            <person name="Feltwell T."/>
            <person name="Fraser A."/>
            <person name="Hamlin N."/>
            <person name="Holroyd S."/>
            <person name="Hornsby T."/>
            <person name="Jagels K."/>
            <person name="Lacroix C."/>
            <person name="Maclean J."/>
            <person name="Moule S."/>
            <person name="Murphy L.D."/>
            <person name="Oliver K."/>
            <person name="Quail M.A."/>
            <person name="Rajandream M.A."/>
            <person name="Rutherford K.M."/>
            <person name="Rutter S."/>
            <person name="Seeger K."/>
            <person name="Simon S."/>
            <person name="Simmonds M."/>
            <person name="Skelton J."/>
            <person name="Squares R."/>
            <person name="Squares S."/>
            <person name="Stevens K."/>
            <person name="Taylor K."/>
            <person name="Whitehead S."/>
            <person name="Woodward J.R."/>
            <person name="Barrell B.G."/>
        </authorList>
    </citation>
    <scope>NUCLEOTIDE SEQUENCE [LARGE SCALE GENOMIC DNA]</scope>
    <source>
        <strain>TN</strain>
    </source>
</reference>
<protein>
    <recommendedName>
        <fullName>Probable cytochrome c oxidase subunit 3</fullName>
        <ecNumber>7.1.1.9</ecNumber>
    </recommendedName>
    <alternativeName>
        <fullName>Cytochrome aa3 subunit 3</fullName>
    </alternativeName>
    <alternativeName>
        <fullName>Cytochrome c oxidase polypeptide III</fullName>
    </alternativeName>
</protein>
<feature type="chain" id="PRO_0000183882" description="Probable cytochrome c oxidase subunit 3">
    <location>
        <begin position="1"/>
        <end position="202"/>
    </location>
</feature>
<feature type="transmembrane region" description="Helical" evidence="2">
    <location>
        <begin position="30"/>
        <end position="50"/>
    </location>
</feature>
<feature type="transmembrane region" description="Helical" evidence="2">
    <location>
        <begin position="69"/>
        <end position="89"/>
    </location>
</feature>
<feature type="transmembrane region" description="Helical" evidence="2">
    <location>
        <begin position="101"/>
        <end position="121"/>
    </location>
</feature>
<feature type="transmembrane region" description="Helical" evidence="2">
    <location>
        <begin position="141"/>
        <end position="161"/>
    </location>
</feature>
<feature type="transmembrane region" description="Helical" evidence="2">
    <location>
        <begin position="178"/>
        <end position="198"/>
    </location>
</feature>